<keyword id="KW-0001">2Fe-2S</keyword>
<keyword id="KW-0963">Cytoplasm</keyword>
<keyword id="KW-0903">Direct protein sequencing</keyword>
<keyword id="KW-0249">Electron transport</keyword>
<keyword id="KW-0274">FAD</keyword>
<keyword id="KW-0285">Flavoprotein</keyword>
<keyword id="KW-0408">Iron</keyword>
<keyword id="KW-0411">Iron-sulfur</keyword>
<keyword id="KW-0479">Metal-binding</keyword>
<keyword id="KW-0560">Oxidoreductase</keyword>
<keyword id="KW-1185">Reference proteome</keyword>
<keyword id="KW-0813">Transport</keyword>
<dbReference type="EC" id="1.12.98.4"/>
<dbReference type="EMBL" id="X75255">
    <property type="protein sequence ID" value="CAA53035.1"/>
    <property type="status" value="ALT_INIT"/>
    <property type="molecule type" value="Genomic_DNA"/>
</dbReference>
<dbReference type="EMBL" id="AE009950">
    <property type="protein sequence ID" value="AAL81016.1"/>
    <property type="molecule type" value="Genomic_DNA"/>
</dbReference>
<dbReference type="PIR" id="S48834">
    <property type="entry name" value="S48834"/>
</dbReference>
<dbReference type="RefSeq" id="WP_011012027.1">
    <property type="nucleotide sequence ID" value="NZ_CP023154.1"/>
</dbReference>
<dbReference type="SMR" id="Q8U2E4"/>
<dbReference type="STRING" id="186497.PF0892"/>
<dbReference type="PaxDb" id="186497-PF0892"/>
<dbReference type="GeneID" id="41712700"/>
<dbReference type="KEGG" id="pfu:PF0892"/>
<dbReference type="PATRIC" id="fig|186497.12.peg.943"/>
<dbReference type="eggNOG" id="arCOG02199">
    <property type="taxonomic scope" value="Archaea"/>
</dbReference>
<dbReference type="HOGENOM" id="CLU_003827_1_1_2"/>
<dbReference type="OrthoDB" id="35401at2157"/>
<dbReference type="PhylomeDB" id="Q8U2E4"/>
<dbReference type="BioCyc" id="MetaCyc:MONOMER-16383"/>
<dbReference type="BRENDA" id="1.12.1.3">
    <property type="organism ID" value="5243"/>
</dbReference>
<dbReference type="BRENDA" id="1.12.98.4">
    <property type="organism ID" value="5243"/>
</dbReference>
<dbReference type="Proteomes" id="UP000001013">
    <property type="component" value="Chromosome"/>
</dbReference>
<dbReference type="GO" id="GO:0005737">
    <property type="term" value="C:cytoplasm"/>
    <property type="evidence" value="ECO:0007669"/>
    <property type="project" value="UniProtKB-SubCell"/>
</dbReference>
<dbReference type="GO" id="GO:0051537">
    <property type="term" value="F:2 iron, 2 sulfur cluster binding"/>
    <property type="evidence" value="ECO:0007669"/>
    <property type="project" value="UniProtKB-KW"/>
</dbReference>
<dbReference type="GO" id="GO:0050660">
    <property type="term" value="F:flavin adenine dinucleotide binding"/>
    <property type="evidence" value="ECO:0007669"/>
    <property type="project" value="InterPro"/>
</dbReference>
<dbReference type="GO" id="GO:0046872">
    <property type="term" value="F:metal ion binding"/>
    <property type="evidence" value="ECO:0007669"/>
    <property type="project" value="UniProtKB-KW"/>
</dbReference>
<dbReference type="GO" id="GO:0033796">
    <property type="term" value="F:sulfur reductase activity"/>
    <property type="evidence" value="ECO:0007669"/>
    <property type="project" value="UniProtKB-EC"/>
</dbReference>
<dbReference type="GO" id="GO:0006221">
    <property type="term" value="P:pyrimidine nucleotide biosynthetic process"/>
    <property type="evidence" value="ECO:0007669"/>
    <property type="project" value="InterPro"/>
</dbReference>
<dbReference type="CDD" id="cd06221">
    <property type="entry name" value="sulfite_reductase_like"/>
    <property type="match status" value="1"/>
</dbReference>
<dbReference type="Gene3D" id="2.10.240.10">
    <property type="entry name" value="Dihydroorotate dehydrogenase, electron transfer subunit"/>
    <property type="match status" value="1"/>
</dbReference>
<dbReference type="Gene3D" id="3.40.50.80">
    <property type="entry name" value="Nucleotide-binding domain of ferredoxin-NADP reductase (FNR) module"/>
    <property type="match status" value="1"/>
</dbReference>
<dbReference type="Gene3D" id="2.40.30.10">
    <property type="entry name" value="Translation factors"/>
    <property type="match status" value="1"/>
</dbReference>
<dbReference type="InterPro" id="IPR008333">
    <property type="entry name" value="Cbr1-like_FAD-bd_dom"/>
</dbReference>
<dbReference type="InterPro" id="IPR012165">
    <property type="entry name" value="Cyt_c3_hydrogenase_gsu"/>
</dbReference>
<dbReference type="InterPro" id="IPR037117">
    <property type="entry name" value="Dihydroorotate_DH_ele_sf"/>
</dbReference>
<dbReference type="InterPro" id="IPR019480">
    <property type="entry name" value="Dihydroorotate_DH_Fe-S-bd"/>
</dbReference>
<dbReference type="InterPro" id="IPR017927">
    <property type="entry name" value="FAD-bd_FR_type"/>
</dbReference>
<dbReference type="InterPro" id="IPR039261">
    <property type="entry name" value="FNR_nucleotide-bd"/>
</dbReference>
<dbReference type="InterPro" id="IPR001433">
    <property type="entry name" value="OxRdtase_FAD/NAD-bd"/>
</dbReference>
<dbReference type="InterPro" id="IPR050353">
    <property type="entry name" value="PyrK_electron_transfer"/>
</dbReference>
<dbReference type="InterPro" id="IPR017938">
    <property type="entry name" value="Riboflavin_synthase-like_b-brl"/>
</dbReference>
<dbReference type="InterPro" id="IPR054941">
    <property type="entry name" value="sulfhyd_HydG"/>
</dbReference>
<dbReference type="NCBIfam" id="NF006220">
    <property type="entry name" value="PRK08345.1"/>
    <property type="match status" value="1"/>
</dbReference>
<dbReference type="NCBIfam" id="NF040835">
    <property type="entry name" value="sulfhyd_HydG"/>
    <property type="match status" value="1"/>
</dbReference>
<dbReference type="PANTHER" id="PTHR43513:SF1">
    <property type="entry name" value="ANAEROBIC SULFITE REDUCTASE SUBUNIT B"/>
    <property type="match status" value="1"/>
</dbReference>
<dbReference type="PANTHER" id="PTHR43513">
    <property type="entry name" value="DIHYDROOROTATE DEHYDROGENASE B (NAD(+)), ELECTRON TRANSFER SUBUNIT"/>
    <property type="match status" value="1"/>
</dbReference>
<dbReference type="Pfam" id="PF10418">
    <property type="entry name" value="DHODB_Fe-S_bind"/>
    <property type="match status" value="1"/>
</dbReference>
<dbReference type="Pfam" id="PF00970">
    <property type="entry name" value="FAD_binding_6"/>
    <property type="match status" value="1"/>
</dbReference>
<dbReference type="Pfam" id="PF00175">
    <property type="entry name" value="NAD_binding_1"/>
    <property type="match status" value="1"/>
</dbReference>
<dbReference type="PIRSF" id="PIRSF006816">
    <property type="entry name" value="Cyc3_hyd_g"/>
    <property type="match status" value="1"/>
</dbReference>
<dbReference type="PRINTS" id="PR00410">
    <property type="entry name" value="PHEHYDRXLASE"/>
</dbReference>
<dbReference type="SUPFAM" id="SSF52343">
    <property type="entry name" value="Ferredoxin reductase-like, C-terminal NADP-linked domain"/>
    <property type="match status" value="1"/>
</dbReference>
<dbReference type="SUPFAM" id="SSF63380">
    <property type="entry name" value="Riboflavin synthase domain-like"/>
    <property type="match status" value="1"/>
</dbReference>
<dbReference type="PROSITE" id="PS51384">
    <property type="entry name" value="FAD_FR"/>
    <property type="match status" value="1"/>
</dbReference>
<accession>Q8U2E4</accession>
<accession>Q59668</accession>
<proteinExistence type="evidence at protein level"/>
<sequence length="292" mass="33054">MMLPKEIMMPNDNPYALHRVKVLKVYSLTETEKLFLFRFEDPELAEKWTFKPGQFVQLTIPGVGEVPISICSSPMRKGFFELCIRKAGRVTTVVHRLKPGDTVLVRGPYGNGFPVDEWEGMDLLLIAAGLGTAPLRSVFLYAMDNRWKYGNITFINTARYGKDLLFYKELEAMKDLAEAENVKIIQSVTRDPNWPGLKGRPQQFIVEANTNPKNTAVAICGPPRMYKSVFEALINYGYRPENIFVTLERRMKCGIGKCGHCNVGTSTSWKYICKDGPVFTYFDIVSTPGLLD</sequence>
<name>HYD1G_PYRFU</name>
<protein>
    <recommendedName>
        <fullName>Sulfhydrogenase 1 subunit gamma</fullName>
        <ecNumber>1.12.98.4</ecNumber>
    </recommendedName>
    <alternativeName>
        <fullName evidence="8">Sulfhydrogenase I subunit gamma</fullName>
    </alternativeName>
    <alternativeName>
        <fullName evidence="8">Sulfur reductase subunit HydG</fullName>
    </alternativeName>
</protein>
<evidence type="ECO:0000250" key="1">
    <source>
        <dbReference type="UniProtKB" id="P56968"/>
    </source>
</evidence>
<evidence type="ECO:0000255" key="2">
    <source>
        <dbReference type="PROSITE-ProRule" id="PRU00716"/>
    </source>
</evidence>
<evidence type="ECO:0000269" key="3">
    <source>
    </source>
</evidence>
<evidence type="ECO:0000269" key="4">
    <source>
    </source>
</evidence>
<evidence type="ECO:0000269" key="5">
    <source>
    </source>
</evidence>
<evidence type="ECO:0000269" key="6">
    <source>
    </source>
</evidence>
<evidence type="ECO:0000269" key="7">
    <source>
    </source>
</evidence>
<evidence type="ECO:0000303" key="8">
    <source>
    </source>
</evidence>
<evidence type="ECO:0000305" key="9"/>
<evidence type="ECO:0000312" key="10">
    <source>
        <dbReference type="EMBL" id="AAL81016.1"/>
    </source>
</evidence>
<organism>
    <name type="scientific">Pyrococcus furiosus (strain ATCC 43587 / DSM 3638 / JCM 8422 / Vc1)</name>
    <dbReference type="NCBI Taxonomy" id="186497"/>
    <lineage>
        <taxon>Archaea</taxon>
        <taxon>Methanobacteriati</taxon>
        <taxon>Methanobacteriota</taxon>
        <taxon>Thermococci</taxon>
        <taxon>Thermococcales</taxon>
        <taxon>Thermococcaceae</taxon>
        <taxon>Pyrococcus</taxon>
    </lineage>
</organism>
<comment type="function">
    <text evidence="3 4 6 7">Part of a bifunctional enzyme complex that functions as an NADPH-dependent hydrogen-evolving hydrogenase with sulfur reducing activity. May play a role in hydrogen cycling during fermentative growth. Activity not exhibited with NAD. The beta and gamma subunits form the sulfur reducing component that catalyzes the cytoplasmic production of hydrogen sulfide in the presence of elemental sulfur. Not active in the presence of sodium sulfate, sodium sulfite, sodium thiosulfate or cysteine.</text>
</comment>
<comment type="catalytic activity">
    <reaction evidence="4 7">
        <text>n sulfur + H2 = (n-1) sulfur + hydrogen sulfide + H(+)</text>
        <dbReference type="Rhea" id="RHEA:35591"/>
        <dbReference type="ChEBI" id="CHEBI:15378"/>
        <dbReference type="ChEBI" id="CHEBI:18276"/>
        <dbReference type="ChEBI" id="CHEBI:26833"/>
        <dbReference type="ChEBI" id="CHEBI:29919"/>
        <dbReference type="EC" id="1.12.98.4"/>
    </reaction>
</comment>
<comment type="cofactor">
    <cofactor evidence="3">
        <name>FAD</name>
        <dbReference type="ChEBI" id="CHEBI:57692"/>
    </cofactor>
    <text evidence="3">Binds 1 FAD per subunit.</text>
</comment>
<comment type="cofactor">
    <cofactor evidence="3">
        <name>[2Fe-2S] cluster</name>
        <dbReference type="ChEBI" id="CHEBI:190135"/>
    </cofactor>
    <text evidence="3">Binds 1 [2Fe-2S] cluster.</text>
</comment>
<comment type="activity regulation">
    <text evidence="7">Stimulated by rubredoxin at pH 7.6 but not ferredoxin.</text>
</comment>
<comment type="biophysicochemical properties">
    <kinetics>
        <Vmax evidence="4 7">6.0 umol/min/mg enzyme</Vmax>
        <text evidence="4">Measured for the whole complex.</text>
    </kinetics>
    <phDependence>
        <text evidence="4 7">Optimum pH is 8.4 for sulfur reductase activity at 80 degrees Celsius.</text>
    </phDependence>
    <temperatureDependence>
        <text evidence="4 7">Optimum temperature is 80 degrees Celsius for maximal sulfur reductase activity. Activity increases linearly from above 30 degrees Celsius to reach maximal levels at 80 degrees Celsius and then decreases to 15% of activity at 90 degrees Celsius.</text>
    </temperatureDependence>
</comment>
<comment type="subunit">
    <text evidence="5 6 7">Heterotetramer of alpha, beta, gamma and delta subunits. The nickel-containing alpha and delta subunits constitute the hydrogenase activity. The beta and gamma subunits (flavin-containing dimer) constitute the sulfur reductase activity.</text>
</comment>
<comment type="subcellular location">
    <subcellularLocation>
        <location evidence="6 7">Cytoplasm</location>
    </subcellularLocation>
</comment>
<comment type="sequence caution" evidence="9">
    <conflict type="erroneous initiation">
        <sequence resource="EMBL-CDS" id="CAA53035"/>
    </conflict>
    <text>Truncated N-terminus.</text>
</comment>
<gene>
    <name evidence="8" type="primary">hydG</name>
    <name type="ordered locus">PF0892</name>
</gene>
<reference evidence="9" key="1">
    <citation type="journal article" date="1995" name="Microbiology">
        <title>Characterization of the locus encoding the [Ni-Fe] sulfhydrogenase from the archaeon Pyrococcus furiosus: evidence for a relationship to bacterial sulfite reductases.</title>
        <authorList>
            <person name="Pedroni P."/>
            <person name="Della Volpe A."/>
            <person name="Galli G."/>
            <person name="Mura G.M."/>
            <person name="Pratesi C."/>
            <person name="Grandi G."/>
        </authorList>
    </citation>
    <scope>NUCLEOTIDE SEQUENCE [GENOMIC DNA]</scope>
    <scope>PROTEIN SEQUENCE OF 1-10</scope>
    <scope>FUNCTION</scope>
    <scope>SUBCELLULAR LOCATION</scope>
    <scope>SUBUNIT</scope>
    <source>
        <strain evidence="6">ATCC 43587 / DSM 3638 / JCM 8422 / Vc1</strain>
    </source>
</reference>
<reference evidence="10" key="2">
    <citation type="journal article" date="1999" name="Genetics">
        <title>Divergence of the hyperthermophilic archaea Pyrococcus furiosus and P. horikoshii inferred from complete genomic sequences.</title>
        <authorList>
            <person name="Maeder D.L."/>
            <person name="Weiss R.B."/>
            <person name="Dunn D.M."/>
            <person name="Cherry J.L."/>
            <person name="Gonzalez J.M."/>
            <person name="DiRuggiero J."/>
            <person name="Robb F.T."/>
        </authorList>
    </citation>
    <scope>NUCLEOTIDE SEQUENCE [LARGE SCALE GENOMIC DNA]</scope>
    <source>
        <strain>ATCC 43587 / DSM 3638 / JCM 8422 / Vc1</strain>
    </source>
</reference>
<reference evidence="9" key="3">
    <citation type="journal article" date="1993" name="Proc. Natl. Acad. Sci. U.S.A.">
        <title>Hydrogenase of the hyperthermophile Pyrococcus furiosus is an elemental sulfur reductase or sulfhydrogenase: evidence for a sulfur-reducing hydrogenase ancestor.</title>
        <authorList>
            <person name="Ma K."/>
            <person name="Schicho R.N."/>
            <person name="Kelly R.M."/>
            <person name="Adams M.W."/>
        </authorList>
    </citation>
    <scope>FUNCTION</scope>
    <scope>CATALYTIC ACTIVITY</scope>
    <scope>ACTIVITY REGULATION</scope>
    <scope>BIOPHYSICOCHEMICAL PROPERTIES</scope>
    <scope>SUBCELLULAR LOCATION</scope>
    <scope>SUBUNIT</scope>
    <source>
        <strain evidence="7">ATCC 43587 / DSM 3638 / JCM 8422 / Vc1</strain>
    </source>
</reference>
<reference evidence="9" key="4">
    <citation type="journal article" date="1995" name="FEBS Lett.">
        <title>Redox properties of the sulfhydrogenase from Pyrococcus furiosus.</title>
        <authorList>
            <person name="Arendsen A.F."/>
            <person name="Veenhuizen P.T."/>
            <person name="Hagen W.R."/>
        </authorList>
    </citation>
    <scope>SUBUNIT</scope>
    <scope>EPR SPECTROSCOPY</scope>
    <source>
        <strain evidence="5">ATCC 43587 / DSM 3638 / JCM 8422 / Vc1</strain>
    </source>
</reference>
<reference evidence="9" key="5">
    <citation type="journal article" date="1999" name="J. Biol. Inorg. Chem.">
        <title>On the prosthetic groups of the NiFe sulfhydrogenase from Pyrococcus furiosus: topology, structure, and temperature-dependent redox chemistry.</title>
        <authorList>
            <person name="Silva P.J."/>
            <person name="de Castro B."/>
            <person name="Hagen W.R."/>
        </authorList>
    </citation>
    <scope>FUNCTION</scope>
    <scope>COFACTOR</scope>
    <scope>EPR SPECTROSCOPY</scope>
    <source>
        <strain evidence="3">ATCC 43587 / DSM 3638 / JCM 8422 / Vc1</strain>
    </source>
</reference>
<reference evidence="9" key="6">
    <citation type="journal article" date="2001" name="Methods Enzymol.">
        <title>Hydrogenases I and II from Pyrococcus furiosus.</title>
        <authorList>
            <person name="Ma K."/>
            <person name="Adams M.W."/>
        </authorList>
    </citation>
    <scope>FUNCTION</scope>
    <scope>CATALYTIC ACTIVITY</scope>
    <scope>COFACTOR</scope>
    <scope>BIOPHYSICOCHEMICAL PROPERTIES</scope>
    <source>
        <strain evidence="4">ATCC 43587 / DSM 3638 / JCM 8422 / Vc1</strain>
    </source>
</reference>
<feature type="chain" id="PRO_0000420728" description="Sulfhydrogenase 1 subunit gamma">
    <location>
        <begin position="1"/>
        <end position="292"/>
    </location>
</feature>
<feature type="domain" description="FAD-binding FR-type" evidence="2">
    <location>
        <begin position="15"/>
        <end position="115"/>
    </location>
</feature>
<feature type="binding site" evidence="1">
    <location>
        <position position="253"/>
    </location>
    <ligand>
        <name>[2Fe-2S] cluster</name>
        <dbReference type="ChEBI" id="CHEBI:190135"/>
    </ligand>
</feature>
<feature type="binding site" evidence="1">
    <location>
        <position position="258"/>
    </location>
    <ligand>
        <name>[2Fe-2S] cluster</name>
        <dbReference type="ChEBI" id="CHEBI:190135"/>
    </ligand>
</feature>
<feature type="binding site" evidence="1">
    <location>
        <position position="261"/>
    </location>
    <ligand>
        <name>[2Fe-2S] cluster</name>
        <dbReference type="ChEBI" id="CHEBI:190135"/>
    </ligand>
</feature>
<feature type="binding site" evidence="1">
    <location>
        <position position="273"/>
    </location>
    <ligand>
        <name>[2Fe-2S] cluster</name>
        <dbReference type="ChEBI" id="CHEBI:190135"/>
    </ligand>
</feature>